<organism>
    <name type="scientific">Prochlorococcus marinus (strain MIT 9515)</name>
    <dbReference type="NCBI Taxonomy" id="167542"/>
    <lineage>
        <taxon>Bacteria</taxon>
        <taxon>Bacillati</taxon>
        <taxon>Cyanobacteriota</taxon>
        <taxon>Cyanophyceae</taxon>
        <taxon>Synechococcales</taxon>
        <taxon>Prochlorococcaceae</taxon>
        <taxon>Prochlorococcus</taxon>
    </lineage>
</organism>
<proteinExistence type="inferred from homology"/>
<evidence type="ECO:0000255" key="1">
    <source>
        <dbReference type="HAMAP-Rule" id="MF_01328"/>
    </source>
</evidence>
<evidence type="ECO:0000256" key="2">
    <source>
        <dbReference type="SAM" id="MobiDB-lite"/>
    </source>
</evidence>
<evidence type="ECO:0000305" key="3"/>
<dbReference type="EMBL" id="CP000552">
    <property type="protein sequence ID" value="ABM72946.1"/>
    <property type="molecule type" value="Genomic_DNA"/>
</dbReference>
<dbReference type="RefSeq" id="WP_011821036.1">
    <property type="nucleotide sequence ID" value="NC_008817.1"/>
</dbReference>
<dbReference type="SMR" id="A2BYT5"/>
<dbReference type="STRING" id="167542.P9515_17391"/>
<dbReference type="GeneID" id="60201916"/>
<dbReference type="KEGG" id="pmc:P9515_17391"/>
<dbReference type="eggNOG" id="COG0088">
    <property type="taxonomic scope" value="Bacteria"/>
</dbReference>
<dbReference type="HOGENOM" id="CLU_041575_5_2_3"/>
<dbReference type="OrthoDB" id="9803201at2"/>
<dbReference type="Proteomes" id="UP000001589">
    <property type="component" value="Chromosome"/>
</dbReference>
<dbReference type="GO" id="GO:1990904">
    <property type="term" value="C:ribonucleoprotein complex"/>
    <property type="evidence" value="ECO:0007669"/>
    <property type="project" value="UniProtKB-KW"/>
</dbReference>
<dbReference type="GO" id="GO:0005840">
    <property type="term" value="C:ribosome"/>
    <property type="evidence" value="ECO:0007669"/>
    <property type="project" value="UniProtKB-KW"/>
</dbReference>
<dbReference type="GO" id="GO:0019843">
    <property type="term" value="F:rRNA binding"/>
    <property type="evidence" value="ECO:0007669"/>
    <property type="project" value="UniProtKB-UniRule"/>
</dbReference>
<dbReference type="GO" id="GO:0003735">
    <property type="term" value="F:structural constituent of ribosome"/>
    <property type="evidence" value="ECO:0007669"/>
    <property type="project" value="InterPro"/>
</dbReference>
<dbReference type="GO" id="GO:0006412">
    <property type="term" value="P:translation"/>
    <property type="evidence" value="ECO:0007669"/>
    <property type="project" value="UniProtKB-UniRule"/>
</dbReference>
<dbReference type="Gene3D" id="3.40.1370.10">
    <property type="match status" value="1"/>
</dbReference>
<dbReference type="HAMAP" id="MF_01328_B">
    <property type="entry name" value="Ribosomal_uL4_B"/>
    <property type="match status" value="1"/>
</dbReference>
<dbReference type="InterPro" id="IPR002136">
    <property type="entry name" value="Ribosomal_uL4"/>
</dbReference>
<dbReference type="InterPro" id="IPR013005">
    <property type="entry name" value="Ribosomal_uL4-like"/>
</dbReference>
<dbReference type="InterPro" id="IPR023574">
    <property type="entry name" value="Ribosomal_uL4_dom_sf"/>
</dbReference>
<dbReference type="NCBIfam" id="TIGR03953">
    <property type="entry name" value="rplD_bact"/>
    <property type="match status" value="1"/>
</dbReference>
<dbReference type="PANTHER" id="PTHR10746">
    <property type="entry name" value="50S RIBOSOMAL PROTEIN L4"/>
    <property type="match status" value="1"/>
</dbReference>
<dbReference type="PANTHER" id="PTHR10746:SF17">
    <property type="entry name" value="LARGE RIBOSOMAL SUBUNIT PROTEIN UL4C"/>
    <property type="match status" value="1"/>
</dbReference>
<dbReference type="Pfam" id="PF00573">
    <property type="entry name" value="Ribosomal_L4"/>
    <property type="match status" value="1"/>
</dbReference>
<dbReference type="SUPFAM" id="SSF52166">
    <property type="entry name" value="Ribosomal protein L4"/>
    <property type="match status" value="1"/>
</dbReference>
<reference key="1">
    <citation type="journal article" date="2007" name="PLoS Genet.">
        <title>Patterns and implications of gene gain and loss in the evolution of Prochlorococcus.</title>
        <authorList>
            <person name="Kettler G.C."/>
            <person name="Martiny A.C."/>
            <person name="Huang K."/>
            <person name="Zucker J."/>
            <person name="Coleman M.L."/>
            <person name="Rodrigue S."/>
            <person name="Chen F."/>
            <person name="Lapidus A."/>
            <person name="Ferriera S."/>
            <person name="Johnson J."/>
            <person name="Steglich C."/>
            <person name="Church G.M."/>
            <person name="Richardson P."/>
            <person name="Chisholm S.W."/>
        </authorList>
    </citation>
    <scope>NUCLEOTIDE SEQUENCE [LARGE SCALE GENOMIC DNA]</scope>
    <source>
        <strain>MIT 9515</strain>
    </source>
</reference>
<keyword id="KW-0687">Ribonucleoprotein</keyword>
<keyword id="KW-0689">Ribosomal protein</keyword>
<keyword id="KW-0694">RNA-binding</keyword>
<keyword id="KW-0699">rRNA-binding</keyword>
<protein>
    <recommendedName>
        <fullName evidence="1">Large ribosomal subunit protein uL4</fullName>
    </recommendedName>
    <alternativeName>
        <fullName evidence="3">50S ribosomal protein L4</fullName>
    </alternativeName>
</protein>
<sequence>MTTLETLKWDGKKVGKVSIDLKVAKETSSSDLIHRAVLRQLANQRQGTASTLTRSEVRGGGRKPYKQKGTGRARQGSIRTPLRPGGGVIFGPKPRSYNLDMNRKERRLALRTALMSRVDDIKAVEDFGSTLNQPKTSEIINGLSRLGIEKTEKVLVILDSPSEVIKKSINNIAKVKLIAADQLNVFDILNANKLVIGQSAINKIQEVYAS</sequence>
<accession>A2BYT5</accession>
<name>RL4_PROM5</name>
<feature type="chain" id="PRO_1000052466" description="Large ribosomal subunit protein uL4">
    <location>
        <begin position="1"/>
        <end position="210"/>
    </location>
</feature>
<feature type="region of interest" description="Disordered" evidence="2">
    <location>
        <begin position="44"/>
        <end position="96"/>
    </location>
</feature>
<feature type="compositionally biased region" description="Polar residues" evidence="2">
    <location>
        <begin position="44"/>
        <end position="54"/>
    </location>
</feature>
<feature type="compositionally biased region" description="Basic residues" evidence="2">
    <location>
        <begin position="60"/>
        <end position="71"/>
    </location>
</feature>
<gene>
    <name evidence="1" type="primary">rplD</name>
    <name evidence="1" type="synonym">rpl4</name>
    <name type="ordered locus">P9515_17391</name>
</gene>
<comment type="function">
    <text evidence="1">One of the primary rRNA binding proteins, this protein initially binds near the 5'-end of the 23S rRNA. It is important during the early stages of 50S assembly. It makes multiple contacts with different domains of the 23S rRNA in the assembled 50S subunit and ribosome.</text>
</comment>
<comment type="function">
    <text evidence="1">Forms part of the polypeptide exit tunnel.</text>
</comment>
<comment type="subunit">
    <text evidence="1">Part of the 50S ribosomal subunit.</text>
</comment>
<comment type="similarity">
    <text evidence="1">Belongs to the universal ribosomal protein uL4 family.</text>
</comment>